<feature type="chain" id="PRO_0000372231" description="Putative antiporter subunit mnhD2">
    <location>
        <begin position="1"/>
        <end position="498"/>
    </location>
</feature>
<feature type="transmembrane region" description="Helical" evidence="2">
    <location>
        <begin position="2"/>
        <end position="22"/>
    </location>
</feature>
<feature type="transmembrane region" description="Helical" evidence="2">
    <location>
        <begin position="32"/>
        <end position="52"/>
    </location>
</feature>
<feature type="transmembrane region" description="Helical" evidence="2">
    <location>
        <begin position="78"/>
        <end position="98"/>
    </location>
</feature>
<feature type="transmembrane region" description="Helical" evidence="2">
    <location>
        <begin position="108"/>
        <end position="128"/>
    </location>
</feature>
<feature type="transmembrane region" description="Helical" evidence="2">
    <location>
        <begin position="130"/>
        <end position="150"/>
    </location>
</feature>
<feature type="transmembrane region" description="Helical" evidence="2">
    <location>
        <begin position="161"/>
        <end position="181"/>
    </location>
</feature>
<feature type="transmembrane region" description="Helical" evidence="2">
    <location>
        <begin position="209"/>
        <end position="229"/>
    </location>
</feature>
<feature type="transmembrane region" description="Helical" evidence="2">
    <location>
        <begin position="240"/>
        <end position="260"/>
    </location>
</feature>
<feature type="transmembrane region" description="Helical" evidence="2">
    <location>
        <begin position="271"/>
        <end position="291"/>
    </location>
</feature>
<feature type="transmembrane region" description="Helical" evidence="2">
    <location>
        <begin position="308"/>
        <end position="328"/>
    </location>
</feature>
<feature type="transmembrane region" description="Helical" evidence="2">
    <location>
        <begin position="330"/>
        <end position="350"/>
    </location>
</feature>
<feature type="transmembrane region" description="Helical" evidence="2">
    <location>
        <begin position="369"/>
        <end position="389"/>
    </location>
</feature>
<feature type="transmembrane region" description="Helical" evidence="2">
    <location>
        <begin position="403"/>
        <end position="423"/>
    </location>
</feature>
<feature type="transmembrane region" description="Helical" evidence="2">
    <location>
        <begin position="451"/>
        <end position="471"/>
    </location>
</feature>
<reference key="1">
    <citation type="submission" date="2007-06" db="EMBL/GenBank/DDBJ databases">
        <title>Complete sequence of chromosome of Staphylococcus aureus subsp. aureus JH1.</title>
        <authorList>
            <consortium name="US DOE Joint Genome Institute"/>
            <person name="Copeland A."/>
            <person name="Lucas S."/>
            <person name="Lapidus A."/>
            <person name="Barry K."/>
            <person name="Detter J.C."/>
            <person name="Glavina del Rio T."/>
            <person name="Hammon N."/>
            <person name="Israni S."/>
            <person name="Dalin E."/>
            <person name="Tice H."/>
            <person name="Pitluck S."/>
            <person name="Chain P."/>
            <person name="Malfatti S."/>
            <person name="Shin M."/>
            <person name="Vergez L."/>
            <person name="Schmutz J."/>
            <person name="Larimer F."/>
            <person name="Land M."/>
            <person name="Hauser L."/>
            <person name="Kyrpides N."/>
            <person name="Ivanova N."/>
            <person name="Tomasz A."/>
            <person name="Richardson P."/>
        </authorList>
    </citation>
    <scope>NUCLEOTIDE SEQUENCE [LARGE SCALE GENOMIC DNA]</scope>
    <source>
        <strain>JH1</strain>
    </source>
</reference>
<accession>A6TZA2</accession>
<comment type="subunit">
    <text evidence="1">May form a heterooligomeric complex that consists of seven subunits: mnhA2, mnhB2, mnhC2, mnhD2, mnhE2, mnhF2 and mnhG2.</text>
</comment>
<comment type="subcellular location">
    <subcellularLocation>
        <location evidence="3">Cell membrane</location>
        <topology evidence="3">Multi-pass membrane protein</topology>
    </subcellularLocation>
</comment>
<comment type="similarity">
    <text evidence="3">Belongs to the CPA3 antiporters (TC 2.A.63) subunit D family.</text>
</comment>
<evidence type="ECO:0000250" key="1"/>
<evidence type="ECO:0000255" key="2"/>
<evidence type="ECO:0000305" key="3"/>
<sequence>MLSNLLILPMLLPFLCALILVFLKNNDRISKYLYLGTMTITTIISLMLLIYVQRHRPITLDFGGWSAPFGIQFLGDSLSLIMVTTASFVITLIMAYGFGRGEHKANRYHLPSFILFLSVGVIGSFLTSDLFNLYVMFEIMLLASFVLITLGQSVEQLRAAIIYVVLNIIGSWLFLLGIGLLYKTVGTLNFSHIAMRLNDMGDNRTVTMISLIFLVAFSAKAALVLFMWLPKAYAVLNTELAALFAALMTKVGAYALIRFFTLLFDQHNDLIHPLLATMAAITMVIGAIGVIAYKDIKKIAAYQVIISIGFIILGLGTNTFAGINGAIFYLVNDIVVKTLLFFIIGSLVYITGYRQYQYLNGLAKKEPLFGVAFIIMIFAIGGVPPFSGFPGKVLIFQGALQNGNYIGLALMIITSLIAMYSLFRILFYMYFGDKDGEEVNFKKIPLYRKRILSILVVVVIAIGIAAPVVLNVTSDATELNTSDQLYQKLVNPHLKGED</sequence>
<protein>
    <recommendedName>
        <fullName>Putative antiporter subunit mnhD2</fullName>
    </recommendedName>
    <alternativeName>
        <fullName>Mrp complex subunit D2</fullName>
    </alternativeName>
    <alternativeName>
        <fullName>Putative NADH-ubiquinone oxidoreductase subunit mnhD2</fullName>
    </alternativeName>
</protein>
<gene>
    <name type="primary">mnhD2</name>
    <name type="synonym">mrpD2</name>
    <name type="ordered locus">SaurJH1_0663</name>
</gene>
<name>MNHD2_STAA2</name>
<proteinExistence type="inferred from homology"/>
<keyword id="KW-0050">Antiport</keyword>
<keyword id="KW-1003">Cell membrane</keyword>
<keyword id="KW-0406">Ion transport</keyword>
<keyword id="KW-0472">Membrane</keyword>
<keyword id="KW-0812">Transmembrane</keyword>
<keyword id="KW-1133">Transmembrane helix</keyword>
<keyword id="KW-0813">Transport</keyword>
<dbReference type="EMBL" id="CP000736">
    <property type="protein sequence ID" value="ABR51520.1"/>
    <property type="molecule type" value="Genomic_DNA"/>
</dbReference>
<dbReference type="SMR" id="A6TZA2"/>
<dbReference type="KEGG" id="sah:SaurJH1_0663"/>
<dbReference type="HOGENOM" id="CLU_007100_9_2_9"/>
<dbReference type="GO" id="GO:0005886">
    <property type="term" value="C:plasma membrane"/>
    <property type="evidence" value="ECO:0007669"/>
    <property type="project" value="UniProtKB-SubCell"/>
</dbReference>
<dbReference type="GO" id="GO:0015297">
    <property type="term" value="F:antiporter activity"/>
    <property type="evidence" value="ECO:0007669"/>
    <property type="project" value="UniProtKB-KW"/>
</dbReference>
<dbReference type="GO" id="GO:0008137">
    <property type="term" value="F:NADH dehydrogenase (ubiquinone) activity"/>
    <property type="evidence" value="ECO:0007669"/>
    <property type="project" value="InterPro"/>
</dbReference>
<dbReference type="GO" id="GO:0042773">
    <property type="term" value="P:ATP synthesis coupled electron transport"/>
    <property type="evidence" value="ECO:0007669"/>
    <property type="project" value="InterPro"/>
</dbReference>
<dbReference type="InterPro" id="IPR050586">
    <property type="entry name" value="CPA3_Na-H_Antiporter_D"/>
</dbReference>
<dbReference type="InterPro" id="IPR003918">
    <property type="entry name" value="NADH_UbQ_OxRdtase"/>
</dbReference>
<dbReference type="InterPro" id="IPR001750">
    <property type="entry name" value="ND/Mrp_TM"/>
</dbReference>
<dbReference type="NCBIfam" id="NF009306">
    <property type="entry name" value="PRK12663.1"/>
    <property type="match status" value="1"/>
</dbReference>
<dbReference type="PANTHER" id="PTHR42703:SF1">
    <property type="entry name" value="NA(+)_H(+) ANTIPORTER SUBUNIT D1"/>
    <property type="match status" value="1"/>
</dbReference>
<dbReference type="PANTHER" id="PTHR42703">
    <property type="entry name" value="NADH DEHYDROGENASE"/>
    <property type="match status" value="1"/>
</dbReference>
<dbReference type="Pfam" id="PF00361">
    <property type="entry name" value="Proton_antipo_M"/>
    <property type="match status" value="1"/>
</dbReference>
<dbReference type="PRINTS" id="PR01437">
    <property type="entry name" value="NUOXDRDTASE4"/>
</dbReference>
<organism>
    <name type="scientific">Staphylococcus aureus (strain JH1)</name>
    <dbReference type="NCBI Taxonomy" id="359787"/>
    <lineage>
        <taxon>Bacteria</taxon>
        <taxon>Bacillati</taxon>
        <taxon>Bacillota</taxon>
        <taxon>Bacilli</taxon>
        <taxon>Bacillales</taxon>
        <taxon>Staphylococcaceae</taxon>
        <taxon>Staphylococcus</taxon>
    </lineage>
</organism>